<comment type="function">
    <text evidence="1">Component of the RavA-ViaA chaperone complex, which may act on the membrane to optimize the function of some of the respiratory chains. ViaA stimulates the ATPase activity of RavA.</text>
</comment>
<comment type="subunit">
    <text evidence="1">Homodimer. Interacts with RavA.</text>
</comment>
<comment type="subcellular location">
    <subcellularLocation>
        <location evidence="1">Cytoplasm</location>
    </subcellularLocation>
</comment>
<comment type="similarity">
    <text evidence="1">Belongs to the ViaA family.</text>
</comment>
<feature type="chain" id="PRO_1000186151" description="Regulatory protein ViaA">
    <location>
        <begin position="1"/>
        <end position="483"/>
    </location>
</feature>
<keyword id="KW-0143">Chaperone</keyword>
<keyword id="KW-0963">Cytoplasm</keyword>
<organism>
    <name type="scientific">Enterobacter sp. (strain 638)</name>
    <dbReference type="NCBI Taxonomy" id="399742"/>
    <lineage>
        <taxon>Bacteria</taxon>
        <taxon>Pseudomonadati</taxon>
        <taxon>Pseudomonadota</taxon>
        <taxon>Gammaproteobacteria</taxon>
        <taxon>Enterobacterales</taxon>
        <taxon>Enterobacteriaceae</taxon>
        <taxon>Enterobacter</taxon>
    </lineage>
</organism>
<evidence type="ECO:0000255" key="1">
    <source>
        <dbReference type="HAMAP-Rule" id="MF_01626"/>
    </source>
</evidence>
<accession>A4WGE2</accession>
<proteinExistence type="inferred from homology"/>
<reference key="1">
    <citation type="journal article" date="2010" name="PLoS Genet.">
        <title>Genome sequence of the plant growth promoting endophytic bacterium Enterobacter sp. 638.</title>
        <authorList>
            <person name="Taghavi S."/>
            <person name="van der Lelie D."/>
            <person name="Hoffman A."/>
            <person name="Zhang Y.B."/>
            <person name="Walla M.D."/>
            <person name="Vangronsveld J."/>
            <person name="Newman L."/>
            <person name="Monchy S."/>
        </authorList>
    </citation>
    <scope>NUCLEOTIDE SEQUENCE [LARGE SCALE GENOMIC DNA]</scope>
    <source>
        <strain>638</strain>
    </source>
</reference>
<sequence>MLTLDTLNVMLAVGEEGLIEEVVLTLLASPQLAAFFEKFPRIKKAVTDDLPRWRDSLRRRLKETEVPPELTEEVECYQQCQRLSTPQFMVQLPQILTLLDKVHSPYAAQARKLVTDNATFTPALHTLFLQRWRLSLVVQTTSLNQQLLEEEREQLLSEVQERMTLTGQLEQVLVENENSAGRLWDMSAGQIKRGDYQLIVKYGDFLAQQPELMQLAEQLGRSREAKSVPKKDAPMETFRTLVREPATVPEQVDGLQQSDDILRLLPTELATLGITELEYEFYRRLVEKQLLTYRLQGESWHEKISQRPVVHQDFDEQPRGPFIVCVDTSGSMGGFNEQCAKAFCLALMRVALADRRRCFIMLFSSEVVGYELTAEQGIEQAIRFLSQRFRGGTDIASCFRSIIERMQGGDWYDADAVVISDFIAQRLPDDVVAKVKSLQRDQQHRFHAVAMSAHGKPGIMRIFDHIWRFDTGLRSRLIRRWKR</sequence>
<protein>
    <recommendedName>
        <fullName evidence="1">Regulatory protein ViaA</fullName>
    </recommendedName>
    <alternativeName>
        <fullName evidence="1">VWA interacting with AAA+ ATPase</fullName>
    </alternativeName>
</protein>
<dbReference type="EMBL" id="CP000653">
    <property type="protein sequence ID" value="ABP62772.1"/>
    <property type="molecule type" value="Genomic_DNA"/>
</dbReference>
<dbReference type="RefSeq" id="WP_015961076.1">
    <property type="nucleotide sequence ID" value="NC_009436.1"/>
</dbReference>
<dbReference type="SMR" id="A4WGE2"/>
<dbReference type="STRING" id="399742.Ent638_4119"/>
<dbReference type="KEGG" id="ent:Ent638_4119"/>
<dbReference type="eggNOG" id="COG2425">
    <property type="taxonomic scope" value="Bacteria"/>
</dbReference>
<dbReference type="HOGENOM" id="CLU_022130_0_0_6"/>
<dbReference type="OrthoDB" id="387240at2"/>
<dbReference type="Proteomes" id="UP000000230">
    <property type="component" value="Chromosome"/>
</dbReference>
<dbReference type="GO" id="GO:0005829">
    <property type="term" value="C:cytosol"/>
    <property type="evidence" value="ECO:0007669"/>
    <property type="project" value="TreeGrafter"/>
</dbReference>
<dbReference type="CDD" id="cd01462">
    <property type="entry name" value="VWA_YIEM_type"/>
    <property type="match status" value="1"/>
</dbReference>
<dbReference type="Gene3D" id="3.40.50.410">
    <property type="entry name" value="von Willebrand factor, type A domain"/>
    <property type="match status" value="1"/>
</dbReference>
<dbReference type="HAMAP" id="MF_01626">
    <property type="entry name" value="ViaA"/>
    <property type="match status" value="1"/>
</dbReference>
<dbReference type="InterPro" id="IPR008912">
    <property type="entry name" value="Uncharacterised_CoxE"/>
</dbReference>
<dbReference type="InterPro" id="IPR023481">
    <property type="entry name" value="Uncharacterised_ViaA"/>
</dbReference>
<dbReference type="InterPro" id="IPR002035">
    <property type="entry name" value="VWF_A"/>
</dbReference>
<dbReference type="InterPro" id="IPR036465">
    <property type="entry name" value="vWFA_dom_sf"/>
</dbReference>
<dbReference type="NCBIfam" id="NF008230">
    <property type="entry name" value="PRK10997.1"/>
    <property type="match status" value="1"/>
</dbReference>
<dbReference type="PANTHER" id="PTHR36846">
    <property type="entry name" value="PROTEIN VIAA"/>
    <property type="match status" value="1"/>
</dbReference>
<dbReference type="PANTHER" id="PTHR36846:SF1">
    <property type="entry name" value="PROTEIN VIAA"/>
    <property type="match status" value="1"/>
</dbReference>
<dbReference type="Pfam" id="PF05762">
    <property type="entry name" value="VWA_CoxE"/>
    <property type="match status" value="1"/>
</dbReference>
<dbReference type="SMART" id="SM00327">
    <property type="entry name" value="VWA"/>
    <property type="match status" value="1"/>
</dbReference>
<dbReference type="SUPFAM" id="SSF53300">
    <property type="entry name" value="vWA-like"/>
    <property type="match status" value="1"/>
</dbReference>
<gene>
    <name evidence="1" type="primary">viaA</name>
    <name type="ordered locus">Ent638_4119</name>
</gene>
<name>VIAA_ENT38</name>